<gene>
    <name evidence="1" type="primary">purC</name>
    <name type="ordered locus">Sare_4107</name>
</gene>
<comment type="catalytic activity">
    <reaction evidence="1">
        <text>5-amino-1-(5-phospho-D-ribosyl)imidazole-4-carboxylate + L-aspartate + ATP = (2S)-2-[5-amino-1-(5-phospho-beta-D-ribosyl)imidazole-4-carboxamido]succinate + ADP + phosphate + 2 H(+)</text>
        <dbReference type="Rhea" id="RHEA:22628"/>
        <dbReference type="ChEBI" id="CHEBI:15378"/>
        <dbReference type="ChEBI" id="CHEBI:29991"/>
        <dbReference type="ChEBI" id="CHEBI:30616"/>
        <dbReference type="ChEBI" id="CHEBI:43474"/>
        <dbReference type="ChEBI" id="CHEBI:58443"/>
        <dbReference type="ChEBI" id="CHEBI:77657"/>
        <dbReference type="ChEBI" id="CHEBI:456216"/>
        <dbReference type="EC" id="6.3.2.6"/>
    </reaction>
</comment>
<comment type="pathway">
    <text evidence="1">Purine metabolism; IMP biosynthesis via de novo pathway; 5-amino-1-(5-phospho-D-ribosyl)imidazole-4-carboxamide from 5-amino-1-(5-phospho-D-ribosyl)imidazole-4-carboxylate: step 1/2.</text>
</comment>
<comment type="similarity">
    <text evidence="1">Belongs to the SAICAR synthetase family.</text>
</comment>
<evidence type="ECO:0000255" key="1">
    <source>
        <dbReference type="HAMAP-Rule" id="MF_00137"/>
    </source>
</evidence>
<dbReference type="EC" id="6.3.2.6" evidence="1"/>
<dbReference type="EMBL" id="CP000850">
    <property type="protein sequence ID" value="ABV99897.1"/>
    <property type="molecule type" value="Genomic_DNA"/>
</dbReference>
<dbReference type="SMR" id="A8M3D4"/>
<dbReference type="STRING" id="391037.Sare_4107"/>
<dbReference type="KEGG" id="saq:Sare_4107"/>
<dbReference type="PATRIC" id="fig|391037.6.peg.4146"/>
<dbReference type="eggNOG" id="COG0152">
    <property type="taxonomic scope" value="Bacteria"/>
</dbReference>
<dbReference type="HOGENOM" id="CLU_045637_0_0_11"/>
<dbReference type="OrthoDB" id="9801549at2"/>
<dbReference type="UniPathway" id="UPA00074">
    <property type="reaction ID" value="UER00131"/>
</dbReference>
<dbReference type="GO" id="GO:0005737">
    <property type="term" value="C:cytoplasm"/>
    <property type="evidence" value="ECO:0007669"/>
    <property type="project" value="TreeGrafter"/>
</dbReference>
<dbReference type="GO" id="GO:0005524">
    <property type="term" value="F:ATP binding"/>
    <property type="evidence" value="ECO:0007669"/>
    <property type="project" value="UniProtKB-KW"/>
</dbReference>
<dbReference type="GO" id="GO:0004639">
    <property type="term" value="F:phosphoribosylaminoimidazolesuccinocarboxamide synthase activity"/>
    <property type="evidence" value="ECO:0007669"/>
    <property type="project" value="UniProtKB-UniRule"/>
</dbReference>
<dbReference type="GO" id="GO:0006189">
    <property type="term" value="P:'de novo' IMP biosynthetic process"/>
    <property type="evidence" value="ECO:0007669"/>
    <property type="project" value="UniProtKB-UniRule"/>
</dbReference>
<dbReference type="CDD" id="cd01414">
    <property type="entry name" value="SAICAR_synt_Sc"/>
    <property type="match status" value="1"/>
</dbReference>
<dbReference type="Gene3D" id="3.30.470.20">
    <property type="entry name" value="ATP-grasp fold, B domain"/>
    <property type="match status" value="1"/>
</dbReference>
<dbReference type="Gene3D" id="3.30.200.20">
    <property type="entry name" value="Phosphorylase Kinase, domain 1"/>
    <property type="match status" value="1"/>
</dbReference>
<dbReference type="HAMAP" id="MF_00137">
    <property type="entry name" value="SAICAR_synth"/>
    <property type="match status" value="1"/>
</dbReference>
<dbReference type="InterPro" id="IPR028923">
    <property type="entry name" value="SAICAR_synt/ADE2_N"/>
</dbReference>
<dbReference type="InterPro" id="IPR001636">
    <property type="entry name" value="SAICAR_synth"/>
</dbReference>
<dbReference type="NCBIfam" id="NF010568">
    <property type="entry name" value="PRK13961.1"/>
    <property type="match status" value="1"/>
</dbReference>
<dbReference type="NCBIfam" id="TIGR00081">
    <property type="entry name" value="purC"/>
    <property type="match status" value="1"/>
</dbReference>
<dbReference type="PANTHER" id="PTHR43700">
    <property type="entry name" value="PHOSPHORIBOSYLAMINOIMIDAZOLE-SUCCINOCARBOXAMIDE SYNTHASE"/>
    <property type="match status" value="1"/>
</dbReference>
<dbReference type="PANTHER" id="PTHR43700:SF1">
    <property type="entry name" value="PHOSPHORIBOSYLAMINOIMIDAZOLE-SUCCINOCARBOXAMIDE SYNTHASE"/>
    <property type="match status" value="1"/>
</dbReference>
<dbReference type="Pfam" id="PF01259">
    <property type="entry name" value="SAICAR_synt"/>
    <property type="match status" value="1"/>
</dbReference>
<dbReference type="SUPFAM" id="SSF56104">
    <property type="entry name" value="SAICAR synthase-like"/>
    <property type="match status" value="1"/>
</dbReference>
<name>PUR7_SALAI</name>
<keyword id="KW-0067">ATP-binding</keyword>
<keyword id="KW-0436">Ligase</keyword>
<keyword id="KW-0547">Nucleotide-binding</keyword>
<keyword id="KW-0658">Purine biosynthesis</keyword>
<reference key="1">
    <citation type="submission" date="2007-10" db="EMBL/GenBank/DDBJ databases">
        <title>Complete sequence of Salinispora arenicola CNS-205.</title>
        <authorList>
            <consortium name="US DOE Joint Genome Institute"/>
            <person name="Copeland A."/>
            <person name="Lucas S."/>
            <person name="Lapidus A."/>
            <person name="Barry K."/>
            <person name="Glavina del Rio T."/>
            <person name="Dalin E."/>
            <person name="Tice H."/>
            <person name="Pitluck S."/>
            <person name="Foster B."/>
            <person name="Schmutz J."/>
            <person name="Larimer F."/>
            <person name="Land M."/>
            <person name="Hauser L."/>
            <person name="Kyrpides N."/>
            <person name="Ivanova N."/>
            <person name="Jensen P.R."/>
            <person name="Moore B.S."/>
            <person name="Penn K."/>
            <person name="Jenkins C."/>
            <person name="Udwary D."/>
            <person name="Xiang L."/>
            <person name="Gontang E."/>
            <person name="Richardson P."/>
        </authorList>
    </citation>
    <scope>NUCLEOTIDE SEQUENCE [LARGE SCALE GENOMIC DNA]</scope>
    <source>
        <strain>CNS-205</strain>
    </source>
</reference>
<protein>
    <recommendedName>
        <fullName evidence="1">Phosphoribosylaminoimidazole-succinocarboxamide synthase</fullName>
        <ecNumber evidence="1">6.3.2.6</ecNumber>
    </recommendedName>
    <alternativeName>
        <fullName evidence="1">SAICAR synthetase</fullName>
    </alternativeName>
</protein>
<organism>
    <name type="scientific">Salinispora arenicola (strain CNS-205)</name>
    <dbReference type="NCBI Taxonomy" id="391037"/>
    <lineage>
        <taxon>Bacteria</taxon>
        <taxon>Bacillati</taxon>
        <taxon>Actinomycetota</taxon>
        <taxon>Actinomycetes</taxon>
        <taxon>Micromonosporales</taxon>
        <taxon>Micromonosporaceae</taxon>
        <taxon>Salinispora</taxon>
    </lineage>
</organism>
<sequence>MELLHSGKVRDVYADGGDLILVASDRISVYDVVLPTPIPDKGKLLTALSLWWFDQLAELVPNHVLSATDVPPEFAGRAIRCRRLDMVPVECVARGYLTGGGFAEYQRTGAVSGVELPRGLVEAAALPEPVFTPSTKAPVGEHDQPITFGGVVDRVGAETAERLRRITLDVYRRGAELAAGRGILIADTKIELGWAADGTLTVGDELLTSDSSRFWPVESYQPGRAQFSYDKQYVRDWATRSGWDKQSPAPELPGEVVDATRARYVDVYEKLTGKRWG</sequence>
<feature type="chain" id="PRO_1000122926" description="Phosphoribosylaminoimidazole-succinocarboxamide synthase">
    <location>
        <begin position="1"/>
        <end position="277"/>
    </location>
</feature>
<proteinExistence type="inferred from homology"/>
<accession>A8M3D4</accession>